<keyword id="KW-0687">Ribonucleoprotein</keyword>
<keyword id="KW-0689">Ribosomal protein</keyword>
<keyword id="KW-0694">RNA-binding</keyword>
<keyword id="KW-0699">rRNA-binding</keyword>
<accession>C4K1P1</accession>
<gene>
    <name evidence="1" type="primary">rplJ</name>
    <name type="ordered locus">RPR_03965</name>
</gene>
<name>RL10_RICPU</name>
<proteinExistence type="inferred from homology"/>
<protein>
    <recommendedName>
        <fullName evidence="1">Large ribosomal subunit protein uL10</fullName>
    </recommendedName>
    <alternativeName>
        <fullName evidence="2">50S ribosomal protein L10</fullName>
    </alternativeName>
</protein>
<evidence type="ECO:0000255" key="1">
    <source>
        <dbReference type="HAMAP-Rule" id="MF_00362"/>
    </source>
</evidence>
<evidence type="ECO:0000305" key="2"/>
<organism>
    <name type="scientific">Rickettsia peacockii (strain Rustic)</name>
    <dbReference type="NCBI Taxonomy" id="562019"/>
    <lineage>
        <taxon>Bacteria</taxon>
        <taxon>Pseudomonadati</taxon>
        <taxon>Pseudomonadota</taxon>
        <taxon>Alphaproteobacteria</taxon>
        <taxon>Rickettsiales</taxon>
        <taxon>Rickettsiaceae</taxon>
        <taxon>Rickettsieae</taxon>
        <taxon>Rickettsia</taxon>
        <taxon>spotted fever group</taxon>
    </lineage>
</organism>
<comment type="function">
    <text evidence="1">Forms part of the ribosomal stalk, playing a central role in the interaction of the ribosome with GTP-bound translation factors.</text>
</comment>
<comment type="subunit">
    <text evidence="1">Part of the ribosomal stalk of the 50S ribosomal subunit. The N-terminus interacts with L11 and the large rRNA to form the base of the stalk. The C-terminus forms an elongated spine to which L12 dimers bind in a sequential fashion forming a multimeric L10(L12)X complex.</text>
</comment>
<comment type="similarity">
    <text evidence="1">Belongs to the universal ribosomal protein uL10 family.</text>
</comment>
<dbReference type="EMBL" id="CP001227">
    <property type="protein sequence ID" value="ACR47491.1"/>
    <property type="molecule type" value="Genomic_DNA"/>
</dbReference>
<dbReference type="RefSeq" id="WP_012736726.1">
    <property type="nucleotide sequence ID" value="NC_012730.1"/>
</dbReference>
<dbReference type="SMR" id="C4K1P1"/>
<dbReference type="KEGG" id="rpk:RPR_03965"/>
<dbReference type="HOGENOM" id="CLU_092227_0_0_5"/>
<dbReference type="Proteomes" id="UP000005015">
    <property type="component" value="Chromosome"/>
</dbReference>
<dbReference type="GO" id="GO:0015934">
    <property type="term" value="C:large ribosomal subunit"/>
    <property type="evidence" value="ECO:0007669"/>
    <property type="project" value="InterPro"/>
</dbReference>
<dbReference type="GO" id="GO:0070180">
    <property type="term" value="F:large ribosomal subunit rRNA binding"/>
    <property type="evidence" value="ECO:0007669"/>
    <property type="project" value="UniProtKB-UniRule"/>
</dbReference>
<dbReference type="GO" id="GO:0003735">
    <property type="term" value="F:structural constituent of ribosome"/>
    <property type="evidence" value="ECO:0007669"/>
    <property type="project" value="InterPro"/>
</dbReference>
<dbReference type="GO" id="GO:0006412">
    <property type="term" value="P:translation"/>
    <property type="evidence" value="ECO:0007669"/>
    <property type="project" value="UniProtKB-UniRule"/>
</dbReference>
<dbReference type="CDD" id="cd05797">
    <property type="entry name" value="Ribosomal_L10"/>
    <property type="match status" value="1"/>
</dbReference>
<dbReference type="Gene3D" id="3.30.70.1730">
    <property type="match status" value="1"/>
</dbReference>
<dbReference type="Gene3D" id="6.10.250.290">
    <property type="match status" value="1"/>
</dbReference>
<dbReference type="HAMAP" id="MF_00362">
    <property type="entry name" value="Ribosomal_uL10"/>
    <property type="match status" value="1"/>
</dbReference>
<dbReference type="InterPro" id="IPR001790">
    <property type="entry name" value="Ribosomal_uL10"/>
</dbReference>
<dbReference type="InterPro" id="IPR043141">
    <property type="entry name" value="Ribosomal_uL10-like_sf"/>
</dbReference>
<dbReference type="InterPro" id="IPR022973">
    <property type="entry name" value="Ribosomal_uL10_bac"/>
</dbReference>
<dbReference type="InterPro" id="IPR047865">
    <property type="entry name" value="Ribosomal_uL10_bac_type"/>
</dbReference>
<dbReference type="InterPro" id="IPR002363">
    <property type="entry name" value="Ribosomal_uL10_CS_bac"/>
</dbReference>
<dbReference type="NCBIfam" id="NF000955">
    <property type="entry name" value="PRK00099.1-1"/>
    <property type="match status" value="1"/>
</dbReference>
<dbReference type="PANTHER" id="PTHR11560">
    <property type="entry name" value="39S RIBOSOMAL PROTEIN L10, MITOCHONDRIAL"/>
    <property type="match status" value="1"/>
</dbReference>
<dbReference type="Pfam" id="PF00466">
    <property type="entry name" value="Ribosomal_L10"/>
    <property type="match status" value="1"/>
</dbReference>
<dbReference type="SUPFAM" id="SSF160369">
    <property type="entry name" value="Ribosomal protein L10-like"/>
    <property type="match status" value="1"/>
</dbReference>
<dbReference type="PROSITE" id="PS01109">
    <property type="entry name" value="RIBOSOMAL_L10"/>
    <property type="match status" value="1"/>
</dbReference>
<sequence>MLRSEKPVAVEDIVNIYKESPSIIITHYHGLTVSQVSSLRESLKSKEAGFKVVKNTLAKIAANQTGLNSIANLFAGPTAIVYSKEPVEMAKLVVNFAKANDNLKIIGGIVDNHVLDEHSIKDFSKLPTLNELRGNIVGLLQAPATKVVGVLQATSSSMARVIQAHASKN</sequence>
<feature type="chain" id="PRO_1000205452" description="Large ribosomal subunit protein uL10">
    <location>
        <begin position="1"/>
        <end position="169"/>
    </location>
</feature>
<reference key="1">
    <citation type="journal article" date="2009" name="PLoS ONE">
        <title>Genome sequence of the endosymbiont Rickettsia peacockii and comparison with virulent Rickettsia rickettsii: identification of virulence factors.</title>
        <authorList>
            <person name="Felsheim R.F."/>
            <person name="Kurtti T.J."/>
            <person name="Munderloh U.G."/>
        </authorList>
    </citation>
    <scope>NUCLEOTIDE SEQUENCE [LARGE SCALE GENOMIC DNA]</scope>
    <source>
        <strain>Rustic</strain>
    </source>
</reference>